<protein>
    <recommendedName>
        <fullName evidence="1">S-adenosylmethionine synthase</fullName>
        <shortName evidence="1">AdoMet synthase</shortName>
        <ecNumber evidence="1">2.5.1.6</ecNumber>
    </recommendedName>
    <alternativeName>
        <fullName evidence="1">MAT</fullName>
    </alternativeName>
    <alternativeName>
        <fullName evidence="1">Methionine adenosyltransferase</fullName>
    </alternativeName>
</protein>
<accession>Q17YQ7</accession>
<sequence>MKDSFLFTSESVTEGHPDKMADQISDAVLDYIIERDKKAKVACETLVSNGFCVITGELKTSIYAPMQEIAREVVKKIGYTDALYGFDYRSAAVLNGIGEQSPDINQGVDREDGEIGAGDQGLVFGYACKETQMLMPLPIHLAHQLTFALAQKRKDNTLPFLRPDGKSQVSVRYENNKPISIDTIVISTQHSPEVSQKHLKEAVIEEIVYKVLPKEYLHDNIKFFVNPTGKFVIGGPQGDAGLTGRKIIVDTYGGSCPHGGGAFSGKDPSKVDRSAAYAARYVAKNLVASGVCDRATVQLAYAIGVVEPVSIYVNTHNTSKYSSAELEKCVKLVFKLTPKGIIESLDLLRPIYSLTSSYGHFGRELEAFTWEKTNKAEEIKAFFKH</sequence>
<organism>
    <name type="scientific">Helicobacter acinonychis (strain Sheeba)</name>
    <dbReference type="NCBI Taxonomy" id="382638"/>
    <lineage>
        <taxon>Bacteria</taxon>
        <taxon>Pseudomonadati</taxon>
        <taxon>Campylobacterota</taxon>
        <taxon>Epsilonproteobacteria</taxon>
        <taxon>Campylobacterales</taxon>
        <taxon>Helicobacteraceae</taxon>
        <taxon>Helicobacter</taxon>
    </lineage>
</organism>
<evidence type="ECO:0000255" key="1">
    <source>
        <dbReference type="HAMAP-Rule" id="MF_00086"/>
    </source>
</evidence>
<keyword id="KW-0067">ATP-binding</keyword>
<keyword id="KW-0963">Cytoplasm</keyword>
<keyword id="KW-0460">Magnesium</keyword>
<keyword id="KW-0479">Metal-binding</keyword>
<keyword id="KW-0547">Nucleotide-binding</keyword>
<keyword id="KW-0554">One-carbon metabolism</keyword>
<keyword id="KW-0630">Potassium</keyword>
<keyword id="KW-0808">Transferase</keyword>
<proteinExistence type="inferred from homology"/>
<gene>
    <name evidence="1" type="primary">metK</name>
    <name type="ordered locus">Hac_0382</name>
</gene>
<reference key="1">
    <citation type="journal article" date="2006" name="PLoS Genet.">
        <title>Who ate whom? Adaptive Helicobacter genomic changes that accompanied a host jump from early humans to large felines.</title>
        <authorList>
            <person name="Eppinger M."/>
            <person name="Baar C."/>
            <person name="Linz B."/>
            <person name="Raddatz G."/>
            <person name="Lanz C."/>
            <person name="Keller H."/>
            <person name="Morelli G."/>
            <person name="Gressmann H."/>
            <person name="Achtman M."/>
            <person name="Schuster S.C."/>
        </authorList>
    </citation>
    <scope>NUCLEOTIDE SEQUENCE [LARGE SCALE GENOMIC DNA]</scope>
    <source>
        <strain>Sheeba</strain>
    </source>
</reference>
<dbReference type="EC" id="2.5.1.6" evidence="1"/>
<dbReference type="EMBL" id="AM260522">
    <property type="protein sequence ID" value="CAJ99219.1"/>
    <property type="molecule type" value="Genomic_DNA"/>
</dbReference>
<dbReference type="RefSeq" id="WP_011577334.1">
    <property type="nucleotide sequence ID" value="NC_008229.1"/>
</dbReference>
<dbReference type="SMR" id="Q17YQ7"/>
<dbReference type="STRING" id="382638.Hac_0382"/>
<dbReference type="GeneID" id="31757890"/>
<dbReference type="KEGG" id="hac:Hac_0382"/>
<dbReference type="eggNOG" id="COG0192">
    <property type="taxonomic scope" value="Bacteria"/>
</dbReference>
<dbReference type="HOGENOM" id="CLU_041802_1_1_7"/>
<dbReference type="OrthoDB" id="9801686at2"/>
<dbReference type="BioCyc" id="HACI382638:HAC_RS01730-MONOMER"/>
<dbReference type="UniPathway" id="UPA00315">
    <property type="reaction ID" value="UER00080"/>
</dbReference>
<dbReference type="Proteomes" id="UP000000775">
    <property type="component" value="Chromosome"/>
</dbReference>
<dbReference type="GO" id="GO:0005737">
    <property type="term" value="C:cytoplasm"/>
    <property type="evidence" value="ECO:0007669"/>
    <property type="project" value="UniProtKB-SubCell"/>
</dbReference>
<dbReference type="GO" id="GO:0005524">
    <property type="term" value="F:ATP binding"/>
    <property type="evidence" value="ECO:0007669"/>
    <property type="project" value="UniProtKB-UniRule"/>
</dbReference>
<dbReference type="GO" id="GO:0000287">
    <property type="term" value="F:magnesium ion binding"/>
    <property type="evidence" value="ECO:0007669"/>
    <property type="project" value="UniProtKB-UniRule"/>
</dbReference>
<dbReference type="GO" id="GO:0004478">
    <property type="term" value="F:methionine adenosyltransferase activity"/>
    <property type="evidence" value="ECO:0007669"/>
    <property type="project" value="UniProtKB-UniRule"/>
</dbReference>
<dbReference type="GO" id="GO:0006730">
    <property type="term" value="P:one-carbon metabolic process"/>
    <property type="evidence" value="ECO:0007669"/>
    <property type="project" value="UniProtKB-KW"/>
</dbReference>
<dbReference type="GO" id="GO:0006556">
    <property type="term" value="P:S-adenosylmethionine biosynthetic process"/>
    <property type="evidence" value="ECO:0007669"/>
    <property type="project" value="UniProtKB-UniRule"/>
</dbReference>
<dbReference type="CDD" id="cd18079">
    <property type="entry name" value="S-AdoMet_synt"/>
    <property type="match status" value="1"/>
</dbReference>
<dbReference type="FunFam" id="3.30.300.10:FF:000003">
    <property type="entry name" value="S-adenosylmethionine synthase"/>
    <property type="match status" value="1"/>
</dbReference>
<dbReference type="Gene3D" id="3.30.300.10">
    <property type="match status" value="3"/>
</dbReference>
<dbReference type="HAMAP" id="MF_00086">
    <property type="entry name" value="S_AdoMet_synth1"/>
    <property type="match status" value="1"/>
</dbReference>
<dbReference type="InterPro" id="IPR022631">
    <property type="entry name" value="ADOMET_SYNTHASE_CS"/>
</dbReference>
<dbReference type="InterPro" id="IPR022630">
    <property type="entry name" value="S-AdoMet_synt_C"/>
</dbReference>
<dbReference type="InterPro" id="IPR022629">
    <property type="entry name" value="S-AdoMet_synt_central"/>
</dbReference>
<dbReference type="InterPro" id="IPR022628">
    <property type="entry name" value="S-AdoMet_synt_N"/>
</dbReference>
<dbReference type="InterPro" id="IPR002133">
    <property type="entry name" value="S-AdoMet_synthetase"/>
</dbReference>
<dbReference type="InterPro" id="IPR022636">
    <property type="entry name" value="S-AdoMet_synthetase_sfam"/>
</dbReference>
<dbReference type="NCBIfam" id="TIGR01034">
    <property type="entry name" value="metK"/>
    <property type="match status" value="1"/>
</dbReference>
<dbReference type="PANTHER" id="PTHR11964">
    <property type="entry name" value="S-ADENOSYLMETHIONINE SYNTHETASE"/>
    <property type="match status" value="1"/>
</dbReference>
<dbReference type="Pfam" id="PF02773">
    <property type="entry name" value="S-AdoMet_synt_C"/>
    <property type="match status" value="1"/>
</dbReference>
<dbReference type="Pfam" id="PF02772">
    <property type="entry name" value="S-AdoMet_synt_M"/>
    <property type="match status" value="1"/>
</dbReference>
<dbReference type="Pfam" id="PF00438">
    <property type="entry name" value="S-AdoMet_synt_N"/>
    <property type="match status" value="1"/>
</dbReference>
<dbReference type="PIRSF" id="PIRSF000497">
    <property type="entry name" value="MAT"/>
    <property type="match status" value="1"/>
</dbReference>
<dbReference type="SUPFAM" id="SSF55973">
    <property type="entry name" value="S-adenosylmethionine synthetase"/>
    <property type="match status" value="3"/>
</dbReference>
<dbReference type="PROSITE" id="PS00376">
    <property type="entry name" value="ADOMET_SYNTHASE_1"/>
    <property type="match status" value="1"/>
</dbReference>
<dbReference type="PROSITE" id="PS00377">
    <property type="entry name" value="ADOMET_SYNTHASE_2"/>
    <property type="match status" value="1"/>
</dbReference>
<comment type="function">
    <text evidence="1">Catalyzes the formation of S-adenosylmethionine (AdoMet) from methionine and ATP. The overall synthetic reaction is composed of two sequential steps, AdoMet formation and the subsequent tripolyphosphate hydrolysis which occurs prior to release of AdoMet from the enzyme.</text>
</comment>
<comment type="catalytic activity">
    <reaction evidence="1">
        <text>L-methionine + ATP + H2O = S-adenosyl-L-methionine + phosphate + diphosphate</text>
        <dbReference type="Rhea" id="RHEA:21080"/>
        <dbReference type="ChEBI" id="CHEBI:15377"/>
        <dbReference type="ChEBI" id="CHEBI:30616"/>
        <dbReference type="ChEBI" id="CHEBI:33019"/>
        <dbReference type="ChEBI" id="CHEBI:43474"/>
        <dbReference type="ChEBI" id="CHEBI:57844"/>
        <dbReference type="ChEBI" id="CHEBI:59789"/>
        <dbReference type="EC" id="2.5.1.6"/>
    </reaction>
</comment>
<comment type="cofactor">
    <cofactor evidence="1">
        <name>Mg(2+)</name>
        <dbReference type="ChEBI" id="CHEBI:18420"/>
    </cofactor>
    <text evidence="1">Binds 2 divalent ions per subunit.</text>
</comment>
<comment type="cofactor">
    <cofactor evidence="1">
        <name>K(+)</name>
        <dbReference type="ChEBI" id="CHEBI:29103"/>
    </cofactor>
    <text evidence="1">Binds 1 potassium ion per subunit.</text>
</comment>
<comment type="pathway">
    <text evidence="1">Amino-acid biosynthesis; S-adenosyl-L-methionine biosynthesis; S-adenosyl-L-methionine from L-methionine: step 1/1.</text>
</comment>
<comment type="subunit">
    <text evidence="1">Homotetramer; dimer of dimers.</text>
</comment>
<comment type="subcellular location">
    <subcellularLocation>
        <location evidence="1">Cytoplasm</location>
    </subcellularLocation>
</comment>
<comment type="similarity">
    <text evidence="1">Belongs to the AdoMet synthase family.</text>
</comment>
<feature type="chain" id="PRO_0000302922" description="S-adenosylmethionine synthase">
    <location>
        <begin position="1"/>
        <end position="385"/>
    </location>
</feature>
<feature type="region of interest" description="Flexible loop" evidence="1">
    <location>
        <begin position="100"/>
        <end position="110"/>
    </location>
</feature>
<feature type="binding site" description="in other chain" evidence="1">
    <location>
        <position position="16"/>
    </location>
    <ligand>
        <name>ATP</name>
        <dbReference type="ChEBI" id="CHEBI:30616"/>
        <note>ligand shared between two neighboring subunits</note>
    </ligand>
</feature>
<feature type="binding site" evidence="1">
    <location>
        <position position="18"/>
    </location>
    <ligand>
        <name>Mg(2+)</name>
        <dbReference type="ChEBI" id="CHEBI:18420"/>
    </ligand>
</feature>
<feature type="binding site" evidence="1">
    <location>
        <position position="44"/>
    </location>
    <ligand>
        <name>K(+)</name>
        <dbReference type="ChEBI" id="CHEBI:29103"/>
    </ligand>
</feature>
<feature type="binding site" description="in other chain" evidence="1">
    <location>
        <position position="57"/>
    </location>
    <ligand>
        <name>L-methionine</name>
        <dbReference type="ChEBI" id="CHEBI:57844"/>
        <note>ligand shared between two neighboring subunits</note>
    </ligand>
</feature>
<feature type="binding site" description="in other chain" evidence="1">
    <location>
        <position position="100"/>
    </location>
    <ligand>
        <name>L-methionine</name>
        <dbReference type="ChEBI" id="CHEBI:57844"/>
        <note>ligand shared between two neighboring subunits</note>
    </ligand>
</feature>
<feature type="binding site" description="in other chain" evidence="1">
    <location>
        <begin position="164"/>
        <end position="166"/>
    </location>
    <ligand>
        <name>ATP</name>
        <dbReference type="ChEBI" id="CHEBI:30616"/>
        <note>ligand shared between two neighboring subunits</note>
    </ligand>
</feature>
<feature type="binding site" description="in other chain" evidence="1">
    <location>
        <begin position="230"/>
        <end position="231"/>
    </location>
    <ligand>
        <name>ATP</name>
        <dbReference type="ChEBI" id="CHEBI:30616"/>
        <note>ligand shared between two neighboring subunits</note>
    </ligand>
</feature>
<feature type="binding site" evidence="1">
    <location>
        <position position="239"/>
    </location>
    <ligand>
        <name>ATP</name>
        <dbReference type="ChEBI" id="CHEBI:30616"/>
        <note>ligand shared between two neighboring subunits</note>
    </ligand>
</feature>
<feature type="binding site" evidence="1">
    <location>
        <position position="239"/>
    </location>
    <ligand>
        <name>L-methionine</name>
        <dbReference type="ChEBI" id="CHEBI:57844"/>
        <note>ligand shared between two neighboring subunits</note>
    </ligand>
</feature>
<feature type="binding site" description="in other chain" evidence="1">
    <location>
        <begin position="245"/>
        <end position="246"/>
    </location>
    <ligand>
        <name>ATP</name>
        <dbReference type="ChEBI" id="CHEBI:30616"/>
        <note>ligand shared between two neighboring subunits</note>
    </ligand>
</feature>
<feature type="binding site" evidence="1">
    <location>
        <position position="262"/>
    </location>
    <ligand>
        <name>ATP</name>
        <dbReference type="ChEBI" id="CHEBI:30616"/>
        <note>ligand shared between two neighboring subunits</note>
    </ligand>
</feature>
<feature type="binding site" evidence="1">
    <location>
        <position position="266"/>
    </location>
    <ligand>
        <name>ATP</name>
        <dbReference type="ChEBI" id="CHEBI:30616"/>
        <note>ligand shared between two neighboring subunits</note>
    </ligand>
</feature>
<feature type="binding site" description="in other chain" evidence="1">
    <location>
        <position position="270"/>
    </location>
    <ligand>
        <name>L-methionine</name>
        <dbReference type="ChEBI" id="CHEBI:57844"/>
        <note>ligand shared between two neighboring subunits</note>
    </ligand>
</feature>
<name>METK_HELAH</name>